<dbReference type="EMBL" id="BA000012">
    <property type="protein sequence ID" value="BAB53514.1"/>
    <property type="molecule type" value="Genomic_DNA"/>
</dbReference>
<dbReference type="RefSeq" id="WP_010914821.1">
    <property type="nucleotide sequence ID" value="NC_002678.2"/>
</dbReference>
<dbReference type="SMR" id="Q986D9"/>
<dbReference type="KEGG" id="mlo:mlr7404"/>
<dbReference type="PATRIC" id="fig|266835.9.peg.5911"/>
<dbReference type="eggNOG" id="COG1160">
    <property type="taxonomic scope" value="Bacteria"/>
</dbReference>
<dbReference type="HOGENOM" id="CLU_016077_5_0_5"/>
<dbReference type="Proteomes" id="UP000000552">
    <property type="component" value="Chromosome"/>
</dbReference>
<dbReference type="GO" id="GO:0005525">
    <property type="term" value="F:GTP binding"/>
    <property type="evidence" value="ECO:0007669"/>
    <property type="project" value="UniProtKB-UniRule"/>
</dbReference>
<dbReference type="GO" id="GO:0042254">
    <property type="term" value="P:ribosome biogenesis"/>
    <property type="evidence" value="ECO:0007669"/>
    <property type="project" value="UniProtKB-KW"/>
</dbReference>
<dbReference type="CDD" id="cd01894">
    <property type="entry name" value="EngA1"/>
    <property type="match status" value="1"/>
</dbReference>
<dbReference type="CDD" id="cd01895">
    <property type="entry name" value="EngA2"/>
    <property type="match status" value="1"/>
</dbReference>
<dbReference type="FunFam" id="3.30.300.20:FF:000004">
    <property type="entry name" value="GTPase Der"/>
    <property type="match status" value="1"/>
</dbReference>
<dbReference type="FunFam" id="3.40.50.300:FF:000057">
    <property type="entry name" value="GTPase Der"/>
    <property type="match status" value="1"/>
</dbReference>
<dbReference type="Gene3D" id="3.30.300.20">
    <property type="match status" value="1"/>
</dbReference>
<dbReference type="Gene3D" id="3.40.50.300">
    <property type="entry name" value="P-loop containing nucleotide triphosphate hydrolases"/>
    <property type="match status" value="2"/>
</dbReference>
<dbReference type="HAMAP" id="MF_00195">
    <property type="entry name" value="GTPase_Der"/>
    <property type="match status" value="1"/>
</dbReference>
<dbReference type="InterPro" id="IPR031166">
    <property type="entry name" value="G_ENGA"/>
</dbReference>
<dbReference type="InterPro" id="IPR006073">
    <property type="entry name" value="GTP-bd"/>
</dbReference>
<dbReference type="InterPro" id="IPR016484">
    <property type="entry name" value="GTPase_Der"/>
</dbReference>
<dbReference type="InterPro" id="IPR032859">
    <property type="entry name" value="KH_dom-like"/>
</dbReference>
<dbReference type="InterPro" id="IPR015946">
    <property type="entry name" value="KH_dom-like_a/b"/>
</dbReference>
<dbReference type="InterPro" id="IPR027417">
    <property type="entry name" value="P-loop_NTPase"/>
</dbReference>
<dbReference type="InterPro" id="IPR005225">
    <property type="entry name" value="Small_GTP-bd"/>
</dbReference>
<dbReference type="NCBIfam" id="TIGR03594">
    <property type="entry name" value="GTPase_EngA"/>
    <property type="match status" value="1"/>
</dbReference>
<dbReference type="NCBIfam" id="TIGR00231">
    <property type="entry name" value="small_GTP"/>
    <property type="match status" value="2"/>
</dbReference>
<dbReference type="PANTHER" id="PTHR43834">
    <property type="entry name" value="GTPASE DER"/>
    <property type="match status" value="1"/>
</dbReference>
<dbReference type="PANTHER" id="PTHR43834:SF6">
    <property type="entry name" value="GTPASE DER"/>
    <property type="match status" value="1"/>
</dbReference>
<dbReference type="Pfam" id="PF14714">
    <property type="entry name" value="KH_dom-like"/>
    <property type="match status" value="1"/>
</dbReference>
<dbReference type="Pfam" id="PF01926">
    <property type="entry name" value="MMR_HSR1"/>
    <property type="match status" value="2"/>
</dbReference>
<dbReference type="PIRSF" id="PIRSF006485">
    <property type="entry name" value="GTP-binding_EngA"/>
    <property type="match status" value="1"/>
</dbReference>
<dbReference type="PRINTS" id="PR00326">
    <property type="entry name" value="GTP1OBG"/>
</dbReference>
<dbReference type="SUPFAM" id="SSF52540">
    <property type="entry name" value="P-loop containing nucleoside triphosphate hydrolases"/>
    <property type="match status" value="2"/>
</dbReference>
<dbReference type="PROSITE" id="PS51712">
    <property type="entry name" value="G_ENGA"/>
    <property type="match status" value="2"/>
</dbReference>
<comment type="function">
    <text evidence="1">GTPase that plays an essential role in the late steps of ribosome biogenesis.</text>
</comment>
<comment type="subunit">
    <text evidence="1">Associates with the 50S ribosomal subunit.</text>
</comment>
<comment type="similarity">
    <text evidence="1">Belongs to the TRAFAC class TrmE-Era-EngA-EngB-Septin-like GTPase superfamily. EngA (Der) GTPase family.</text>
</comment>
<reference key="1">
    <citation type="journal article" date="2000" name="DNA Res.">
        <title>Complete genome structure of the nitrogen-fixing symbiotic bacterium Mesorhizobium loti.</title>
        <authorList>
            <person name="Kaneko T."/>
            <person name="Nakamura Y."/>
            <person name="Sato S."/>
            <person name="Asamizu E."/>
            <person name="Kato T."/>
            <person name="Sasamoto S."/>
            <person name="Watanabe A."/>
            <person name="Idesawa K."/>
            <person name="Ishikawa A."/>
            <person name="Kawashima K."/>
            <person name="Kimura T."/>
            <person name="Kishida Y."/>
            <person name="Kiyokawa C."/>
            <person name="Kohara M."/>
            <person name="Matsumoto M."/>
            <person name="Matsuno A."/>
            <person name="Mochizuki Y."/>
            <person name="Nakayama S."/>
            <person name="Nakazaki N."/>
            <person name="Shimpo S."/>
            <person name="Sugimoto M."/>
            <person name="Takeuchi C."/>
            <person name="Yamada M."/>
            <person name="Tabata S."/>
        </authorList>
    </citation>
    <scope>NUCLEOTIDE SEQUENCE [LARGE SCALE GENOMIC DNA]</scope>
    <source>
        <strain>LMG 29417 / CECT 9101 / MAFF 303099</strain>
    </source>
</reference>
<organism>
    <name type="scientific">Mesorhizobium japonicum (strain LMG 29417 / CECT 9101 / MAFF 303099)</name>
    <name type="common">Mesorhizobium loti (strain MAFF 303099)</name>
    <dbReference type="NCBI Taxonomy" id="266835"/>
    <lineage>
        <taxon>Bacteria</taxon>
        <taxon>Pseudomonadati</taxon>
        <taxon>Pseudomonadota</taxon>
        <taxon>Alphaproteobacteria</taxon>
        <taxon>Hyphomicrobiales</taxon>
        <taxon>Phyllobacteriaceae</taxon>
        <taxon>Mesorhizobium</taxon>
    </lineage>
</organism>
<proteinExistence type="inferred from homology"/>
<feature type="chain" id="PRO_0000179034" description="GTPase Der">
    <location>
        <begin position="1"/>
        <end position="479"/>
    </location>
</feature>
<feature type="domain" description="EngA-type G 1">
    <location>
        <begin position="3"/>
        <end position="167"/>
    </location>
</feature>
<feature type="domain" description="EngA-type G 2">
    <location>
        <begin position="208"/>
        <end position="383"/>
    </location>
</feature>
<feature type="domain" description="KH-like" evidence="1">
    <location>
        <begin position="384"/>
        <end position="468"/>
    </location>
</feature>
<feature type="binding site" evidence="1">
    <location>
        <begin position="9"/>
        <end position="16"/>
    </location>
    <ligand>
        <name>GTP</name>
        <dbReference type="ChEBI" id="CHEBI:37565"/>
        <label>1</label>
    </ligand>
</feature>
<feature type="binding site" evidence="1">
    <location>
        <begin position="56"/>
        <end position="60"/>
    </location>
    <ligand>
        <name>GTP</name>
        <dbReference type="ChEBI" id="CHEBI:37565"/>
        <label>1</label>
    </ligand>
</feature>
<feature type="binding site" evidence="1">
    <location>
        <begin position="119"/>
        <end position="122"/>
    </location>
    <ligand>
        <name>GTP</name>
        <dbReference type="ChEBI" id="CHEBI:37565"/>
        <label>1</label>
    </ligand>
</feature>
<feature type="binding site" evidence="1">
    <location>
        <begin position="214"/>
        <end position="221"/>
    </location>
    <ligand>
        <name>GTP</name>
        <dbReference type="ChEBI" id="CHEBI:37565"/>
        <label>2</label>
    </ligand>
</feature>
<feature type="binding site" evidence="1">
    <location>
        <begin position="261"/>
        <end position="265"/>
    </location>
    <ligand>
        <name>GTP</name>
        <dbReference type="ChEBI" id="CHEBI:37565"/>
        <label>2</label>
    </ligand>
</feature>
<feature type="binding site" evidence="1">
    <location>
        <begin position="326"/>
        <end position="329"/>
    </location>
    <ligand>
        <name>GTP</name>
        <dbReference type="ChEBI" id="CHEBI:37565"/>
        <label>2</label>
    </ligand>
</feature>
<keyword id="KW-0342">GTP-binding</keyword>
<keyword id="KW-0547">Nucleotide-binding</keyword>
<keyword id="KW-0677">Repeat</keyword>
<keyword id="KW-0690">Ribosome biogenesis</keyword>
<evidence type="ECO:0000255" key="1">
    <source>
        <dbReference type="HAMAP-Rule" id="MF_00195"/>
    </source>
</evidence>
<sequence length="479" mass="52776">MTFKVAIIGRPNVGKSTLFNRLVGRKLALVDDTPGVTRDRRVHAAKLYDLHFDVIDTAGFEDAGASTLPGRMRAQTEIAIHEADLIFFTIDAKSGLLPDDRTFAEIVRKSGKPVVLVANKAEAKGAQGGMLEAWELGLGEPIPVSAEHGQGMPDLRDAVIAALGEARAFGEEEEGEDDEIAATEVLIGEDIADPDAEDAHTYDNTKPMRIAVVGRPNAGKSTLINALIGEERLLTGPEAGITRDSISVDWDWHGRRLKLFDTAGMRRKARIHEKLEVMSVQDGLRAIRFAEIVIIVLDATIPFEKQDLQIADLIIREGRAPVIAFNKWDLIDHPQELLAELREKTERLLPQVRGIQAVPVSAETGRGLDKLMDAVLRTHKVWNSRVSTGKLNRWLEAILAHHPPPAVAGRRLKVKYVTQAKTRPPGFVVQCSRPDAMPQSYVRYLSNSLREAFDMPGVPIRIALRTSDNPFAGRAKKRG</sequence>
<name>DER_RHILO</name>
<protein>
    <recommendedName>
        <fullName evidence="1">GTPase Der</fullName>
    </recommendedName>
    <alternativeName>
        <fullName evidence="1">GTP-binding protein EngA</fullName>
    </alternativeName>
</protein>
<gene>
    <name evidence="1" type="primary">der</name>
    <name type="synonym">engA</name>
    <name type="ordered locus">mlr7404</name>
</gene>
<accession>Q986D9</accession>